<gene>
    <name evidence="1" type="primary">rplX</name>
    <name type="ordered locus">HDEF_1855</name>
</gene>
<accession>C4K7A7</accession>
<evidence type="ECO:0000255" key="1">
    <source>
        <dbReference type="HAMAP-Rule" id="MF_01326"/>
    </source>
</evidence>
<evidence type="ECO:0000305" key="2"/>
<keyword id="KW-0687">Ribonucleoprotein</keyword>
<keyword id="KW-0689">Ribosomal protein</keyword>
<keyword id="KW-0694">RNA-binding</keyword>
<keyword id="KW-0699">rRNA-binding</keyword>
<sequence>MAMKIRCNDQIIVLTGKDKGKRTKIKKILKNGKVILEGVNLVKKHQKPVPAQNQPGGIIEKEAPIDFSNVAIFNEDTGKADRIGFKYENGKKVRFFKSSGKAIAKINKS</sequence>
<dbReference type="EMBL" id="CP001277">
    <property type="protein sequence ID" value="ACQ68450.1"/>
    <property type="molecule type" value="Genomic_DNA"/>
</dbReference>
<dbReference type="RefSeq" id="WP_015874214.1">
    <property type="nucleotide sequence ID" value="NC_012751.1"/>
</dbReference>
<dbReference type="SMR" id="C4K7A7"/>
<dbReference type="STRING" id="572265.HDEF_1855"/>
<dbReference type="GeneID" id="66261440"/>
<dbReference type="KEGG" id="hde:HDEF_1855"/>
<dbReference type="eggNOG" id="COG0198">
    <property type="taxonomic scope" value="Bacteria"/>
</dbReference>
<dbReference type="HOGENOM" id="CLU_093315_2_2_6"/>
<dbReference type="Proteomes" id="UP000002334">
    <property type="component" value="Chromosome"/>
</dbReference>
<dbReference type="GO" id="GO:0005829">
    <property type="term" value="C:cytosol"/>
    <property type="evidence" value="ECO:0007669"/>
    <property type="project" value="UniProtKB-ARBA"/>
</dbReference>
<dbReference type="GO" id="GO:1990904">
    <property type="term" value="C:ribonucleoprotein complex"/>
    <property type="evidence" value="ECO:0007669"/>
    <property type="project" value="UniProtKB-KW"/>
</dbReference>
<dbReference type="GO" id="GO:0005840">
    <property type="term" value="C:ribosome"/>
    <property type="evidence" value="ECO:0007669"/>
    <property type="project" value="UniProtKB-KW"/>
</dbReference>
<dbReference type="GO" id="GO:0019843">
    <property type="term" value="F:rRNA binding"/>
    <property type="evidence" value="ECO:0007669"/>
    <property type="project" value="UniProtKB-UniRule"/>
</dbReference>
<dbReference type="GO" id="GO:0003735">
    <property type="term" value="F:structural constituent of ribosome"/>
    <property type="evidence" value="ECO:0007669"/>
    <property type="project" value="InterPro"/>
</dbReference>
<dbReference type="GO" id="GO:0006412">
    <property type="term" value="P:translation"/>
    <property type="evidence" value="ECO:0007669"/>
    <property type="project" value="UniProtKB-UniRule"/>
</dbReference>
<dbReference type="CDD" id="cd06089">
    <property type="entry name" value="KOW_RPL26"/>
    <property type="match status" value="1"/>
</dbReference>
<dbReference type="FunFam" id="2.30.30.30:FF:000004">
    <property type="entry name" value="50S ribosomal protein L24"/>
    <property type="match status" value="1"/>
</dbReference>
<dbReference type="Gene3D" id="2.30.30.30">
    <property type="match status" value="1"/>
</dbReference>
<dbReference type="HAMAP" id="MF_01326_B">
    <property type="entry name" value="Ribosomal_uL24_B"/>
    <property type="match status" value="1"/>
</dbReference>
<dbReference type="InterPro" id="IPR014722">
    <property type="entry name" value="Rib_uL2_dom2"/>
</dbReference>
<dbReference type="InterPro" id="IPR003256">
    <property type="entry name" value="Ribosomal_uL24"/>
</dbReference>
<dbReference type="InterPro" id="IPR041988">
    <property type="entry name" value="Ribosomal_uL24_KOW"/>
</dbReference>
<dbReference type="InterPro" id="IPR008991">
    <property type="entry name" value="Translation_prot_SH3-like_sf"/>
</dbReference>
<dbReference type="NCBIfam" id="TIGR01079">
    <property type="entry name" value="rplX_bact"/>
    <property type="match status" value="1"/>
</dbReference>
<dbReference type="PANTHER" id="PTHR12903">
    <property type="entry name" value="MITOCHONDRIAL RIBOSOMAL PROTEIN L24"/>
    <property type="match status" value="1"/>
</dbReference>
<dbReference type="Pfam" id="PF17136">
    <property type="entry name" value="ribosomal_L24"/>
    <property type="match status" value="1"/>
</dbReference>
<dbReference type="SUPFAM" id="SSF50104">
    <property type="entry name" value="Translation proteins SH3-like domain"/>
    <property type="match status" value="1"/>
</dbReference>
<name>RL24_HAMD5</name>
<comment type="function">
    <text evidence="1">One of two assembly initiator proteins, it binds directly to the 5'-end of the 23S rRNA, where it nucleates assembly of the 50S subunit.</text>
</comment>
<comment type="function">
    <text evidence="1">One of the proteins that surrounds the polypeptide exit tunnel on the outside of the subunit.</text>
</comment>
<comment type="subunit">
    <text evidence="1">Part of the 50S ribosomal subunit.</text>
</comment>
<comment type="similarity">
    <text evidence="1">Belongs to the universal ribosomal protein uL24 family.</text>
</comment>
<protein>
    <recommendedName>
        <fullName evidence="1">Large ribosomal subunit protein uL24</fullName>
    </recommendedName>
    <alternativeName>
        <fullName evidence="2">50S ribosomal protein L24</fullName>
    </alternativeName>
</protein>
<proteinExistence type="inferred from homology"/>
<reference key="1">
    <citation type="journal article" date="2009" name="Proc. Natl. Acad. Sci. U.S.A.">
        <title>Hamiltonella defensa, genome evolution of protective bacterial endosymbiont from pathogenic ancestors.</title>
        <authorList>
            <person name="Degnan P.H."/>
            <person name="Yu Y."/>
            <person name="Sisneros N."/>
            <person name="Wing R.A."/>
            <person name="Moran N.A."/>
        </authorList>
    </citation>
    <scope>NUCLEOTIDE SEQUENCE [LARGE SCALE GENOMIC DNA]</scope>
    <source>
        <strain>5AT</strain>
    </source>
</reference>
<feature type="chain" id="PRO_1000214548" description="Large ribosomal subunit protein uL24">
    <location>
        <begin position="1"/>
        <end position="109"/>
    </location>
</feature>
<organism>
    <name type="scientific">Hamiltonella defensa subsp. Acyrthosiphon pisum (strain 5AT)</name>
    <dbReference type="NCBI Taxonomy" id="572265"/>
    <lineage>
        <taxon>Bacteria</taxon>
        <taxon>Pseudomonadati</taxon>
        <taxon>Pseudomonadota</taxon>
        <taxon>Gammaproteobacteria</taxon>
        <taxon>Enterobacterales</taxon>
        <taxon>Enterobacteriaceae</taxon>
        <taxon>aphid secondary symbionts</taxon>
        <taxon>Candidatus Hamiltonella</taxon>
    </lineage>
</organism>